<protein>
    <recommendedName>
        <fullName>Mitochondrial import inner membrane translocase subunit TIM44-1</fullName>
    </recommendedName>
</protein>
<feature type="transit peptide" description="Mitochondrion" evidence="2">
    <location>
        <begin position="1"/>
        <end position="54"/>
    </location>
</feature>
<feature type="chain" id="PRO_0000420941" description="Mitochondrial import inner membrane translocase subunit TIM44-1">
    <location>
        <begin position="55"/>
        <end position="474"/>
    </location>
</feature>
<feature type="region of interest" description="Disordered" evidence="3">
    <location>
        <begin position="132"/>
        <end position="165"/>
    </location>
</feature>
<feature type="coiled-coil region" evidence="2">
    <location>
        <begin position="68"/>
        <end position="88"/>
    </location>
</feature>
<feature type="compositionally biased region" description="Basic and acidic residues" evidence="3">
    <location>
        <begin position="132"/>
        <end position="143"/>
    </location>
</feature>
<feature type="compositionally biased region" description="Polar residues" evidence="3">
    <location>
        <begin position="145"/>
        <end position="165"/>
    </location>
</feature>
<feature type="splice variant" id="VSP_044958" description="In isoform 2." evidence="5">
    <location>
        <begin position="26"/>
        <end position="27"/>
    </location>
</feature>
<organism>
    <name type="scientific">Arabidopsis thaliana</name>
    <name type="common">Mouse-ear cress</name>
    <dbReference type="NCBI Taxonomy" id="3702"/>
    <lineage>
        <taxon>Eukaryota</taxon>
        <taxon>Viridiplantae</taxon>
        <taxon>Streptophyta</taxon>
        <taxon>Embryophyta</taxon>
        <taxon>Tracheophyta</taxon>
        <taxon>Spermatophyta</taxon>
        <taxon>Magnoliopsida</taxon>
        <taxon>eudicotyledons</taxon>
        <taxon>Gunneridae</taxon>
        <taxon>Pentapetalae</taxon>
        <taxon>rosids</taxon>
        <taxon>malvids</taxon>
        <taxon>Brassicales</taxon>
        <taxon>Brassicaceae</taxon>
        <taxon>Camelineae</taxon>
        <taxon>Arabidopsis</taxon>
    </lineage>
</organism>
<sequence>MAIRKIIRDLLITKQPLLRQLFHQRVLRANARSEFLPAIGYTSHRRFSVFTEFSKNIRGEAHSNPEFERTVKELKERTEEFKGVTEDLKVRTKQTTEKLYKQADGVWTEAESAAKKVSSSVKDKLSAASEEVKESFKLGKEENAESASSSGTRASQGEKQQSGSTEELHTFFAKFKSSLSSPKVSEVFYRLKEAKPFDIVKQALDIVKDELRGNPSRKKFLEHTPPPPFTGERSMRTEMVVTQTKQSKLQQKWESFREKMQGSPVFKRLSGMSEPVVNKSQEIAEDVREIWETSDNPIVHKIQDMNEKFLKETDSASTYKEIRSRDPSFSLPDFAAEIEEVIKPVLNAYSEGDVETLKKYCSKEVIERCTAERTAYQTHGVLFDNKLLHISEVSVSVTKMMGDSPIIIAKFQTQEIYCVRDENGEIQEGGQDTIHTVYHEWAMQQVETTELGEDAIYPIWRLREMCRNGVQALI</sequence>
<evidence type="ECO:0000250" key="1"/>
<evidence type="ECO:0000255" key="2"/>
<evidence type="ECO:0000256" key="3">
    <source>
        <dbReference type="SAM" id="MobiDB-lite"/>
    </source>
</evidence>
<evidence type="ECO:0000269" key="4">
    <source>
    </source>
</evidence>
<evidence type="ECO:0000305" key="5"/>
<dbReference type="EMBL" id="AC007109">
    <property type="protein sequence ID" value="AAD25651.2"/>
    <property type="molecule type" value="Genomic_DNA"/>
</dbReference>
<dbReference type="EMBL" id="CP002685">
    <property type="protein sequence ID" value="AEC07020.1"/>
    <property type="molecule type" value="Genomic_DNA"/>
</dbReference>
<dbReference type="EMBL" id="CP002685">
    <property type="protein sequence ID" value="ANM63221.1"/>
    <property type="molecule type" value="Genomic_DNA"/>
</dbReference>
<dbReference type="EMBL" id="DQ446533">
    <property type="protein sequence ID" value="ABE65836.1"/>
    <property type="molecule type" value="mRNA"/>
</dbReference>
<dbReference type="PIR" id="B84590">
    <property type="entry name" value="B84590"/>
</dbReference>
<dbReference type="RefSeq" id="NP_001325325.1">
    <molecule id="Q1PF33-1"/>
    <property type="nucleotide sequence ID" value="NM_001335691.1"/>
</dbReference>
<dbReference type="RefSeq" id="NP_565473.1">
    <molecule id="Q1PF33-2"/>
    <property type="nucleotide sequence ID" value="NM_127610.1"/>
</dbReference>
<dbReference type="SMR" id="Q1PF33"/>
<dbReference type="FunCoup" id="Q1PF33">
    <property type="interactions" value="3185"/>
</dbReference>
<dbReference type="STRING" id="3702.Q1PF33"/>
<dbReference type="PaxDb" id="3702-AT2G20510.1"/>
<dbReference type="EnsemblPlants" id="AT2G20510.1">
    <molecule id="Q1PF33-2"/>
    <property type="protein sequence ID" value="AT2G20510.1"/>
    <property type="gene ID" value="AT2G20510"/>
</dbReference>
<dbReference type="EnsemblPlants" id="AT2G20510.3">
    <molecule id="Q1PF33-1"/>
    <property type="protein sequence ID" value="AT2G20510.3"/>
    <property type="gene ID" value="AT2G20510"/>
</dbReference>
<dbReference type="GeneID" id="816572"/>
<dbReference type="Gramene" id="AT2G20510.1">
    <molecule id="Q1PF33-2"/>
    <property type="protein sequence ID" value="AT2G20510.1"/>
    <property type="gene ID" value="AT2G20510"/>
</dbReference>
<dbReference type="Gramene" id="AT2G20510.3">
    <molecule id="Q1PF33-1"/>
    <property type="protein sequence ID" value="AT2G20510.3"/>
    <property type="gene ID" value="AT2G20510"/>
</dbReference>
<dbReference type="KEGG" id="ath:AT2G20510"/>
<dbReference type="Araport" id="AT2G20510"/>
<dbReference type="TAIR" id="AT2G20510">
    <property type="gene designation" value="TIM44-1"/>
</dbReference>
<dbReference type="eggNOG" id="KOG2580">
    <property type="taxonomic scope" value="Eukaryota"/>
</dbReference>
<dbReference type="HOGENOM" id="CLU_038444_0_0_1"/>
<dbReference type="InParanoid" id="Q1PF33"/>
<dbReference type="OMA" id="ECETEII"/>
<dbReference type="PRO" id="PR:Q1PF33"/>
<dbReference type="Proteomes" id="UP000006548">
    <property type="component" value="Chromosome 2"/>
</dbReference>
<dbReference type="ExpressionAtlas" id="Q1PF33">
    <property type="expression patterns" value="baseline and differential"/>
</dbReference>
<dbReference type="GO" id="GO:0005744">
    <property type="term" value="C:TIM23 mitochondrial import inner membrane translocase complex"/>
    <property type="evidence" value="ECO:0000304"/>
    <property type="project" value="TAIR"/>
</dbReference>
<dbReference type="GO" id="GO:0015462">
    <property type="term" value="F:ABC-type protein transporter activity"/>
    <property type="evidence" value="ECO:0000304"/>
    <property type="project" value="TAIR"/>
</dbReference>
<dbReference type="GO" id="GO:0006626">
    <property type="term" value="P:protein targeting to mitochondrion"/>
    <property type="evidence" value="ECO:0000304"/>
    <property type="project" value="TAIR"/>
</dbReference>
<dbReference type="FunFam" id="3.10.450.240:FF:000005">
    <property type="entry name" value="Mitochondrial import inner membrane translocase subunit TIM44-2"/>
    <property type="match status" value="1"/>
</dbReference>
<dbReference type="Gene3D" id="3.10.450.240">
    <property type="match status" value="1"/>
</dbReference>
<dbReference type="InterPro" id="IPR032710">
    <property type="entry name" value="NTF2-like_dom_sf"/>
</dbReference>
<dbReference type="InterPro" id="IPR039544">
    <property type="entry name" value="Tim44-like"/>
</dbReference>
<dbReference type="InterPro" id="IPR007379">
    <property type="entry name" value="Tim44-like_dom"/>
</dbReference>
<dbReference type="PANTHER" id="PTHR10721">
    <property type="entry name" value="MITOCHONDRIAL IMPORT INNER MEMBRANE TRANSLOCASE SUBUNIT TIM44"/>
    <property type="match status" value="1"/>
</dbReference>
<dbReference type="PANTHER" id="PTHR10721:SF1">
    <property type="entry name" value="MITOCHONDRIAL IMPORT INNER MEMBRANE TRANSLOCASE SUBUNIT TIM44"/>
    <property type="match status" value="1"/>
</dbReference>
<dbReference type="Pfam" id="PF04280">
    <property type="entry name" value="Tim44"/>
    <property type="match status" value="1"/>
</dbReference>
<dbReference type="SMART" id="SM00978">
    <property type="entry name" value="Tim44"/>
    <property type="match status" value="1"/>
</dbReference>
<dbReference type="SUPFAM" id="SSF54427">
    <property type="entry name" value="NTF2-like"/>
    <property type="match status" value="1"/>
</dbReference>
<keyword id="KW-0025">Alternative splicing</keyword>
<keyword id="KW-0175">Coiled coil</keyword>
<keyword id="KW-0472">Membrane</keyword>
<keyword id="KW-0496">Mitochondrion</keyword>
<keyword id="KW-0999">Mitochondrion inner membrane</keyword>
<keyword id="KW-1185">Reference proteome</keyword>
<keyword id="KW-0809">Transit peptide</keyword>
<comment type="function">
    <text evidence="1">Essential component of the PAM complex, a complex required for the translocation of transit peptide-containing proteins from the inner membrane into the mitochondrial matrix in an ATP-dependent manner. Recruits mitochondrial HSP70 to drive protein translocation into the matrix using ATP as an energy source (By similarity).</text>
</comment>
<comment type="subunit">
    <text evidence="1">Probable component of the PAM complex at least composed of a mitochondrial HSP70 protein, TIMM44 and TIMM14. The complex interacts with the TIMM23 component of the TIM17:23 complex (By similarity).</text>
</comment>
<comment type="subcellular location">
    <subcellularLocation>
        <location evidence="1">Mitochondrion inner membrane</location>
    </subcellularLocation>
</comment>
<comment type="alternative products">
    <event type="alternative splicing"/>
    <isoform>
        <id>Q1PF33-1</id>
        <name>1</name>
        <sequence type="displayed"/>
    </isoform>
    <isoform>
        <id>Q1PF33-2</id>
        <name>2</name>
        <sequence type="described" ref="VSP_044958"/>
    </isoform>
</comment>
<comment type="tissue specificity">
    <text evidence="4">Expressed in roots, flowers, young cotyledons and leaves.</text>
</comment>
<comment type="similarity">
    <text evidence="5">Belongs to the Tim44 family.</text>
</comment>
<accession>Q1PF33</accession>
<accession>Q9SIL8</accession>
<gene>
    <name type="primary">TIM44-1</name>
    <name type="ordered locus">At2g20510</name>
    <name type="ORF">T13C7.10</name>
</gene>
<reference key="1">
    <citation type="journal article" date="1999" name="Nature">
        <title>Sequence and analysis of chromosome 2 of the plant Arabidopsis thaliana.</title>
        <authorList>
            <person name="Lin X."/>
            <person name="Kaul S."/>
            <person name="Rounsley S.D."/>
            <person name="Shea T.P."/>
            <person name="Benito M.-I."/>
            <person name="Town C.D."/>
            <person name="Fujii C.Y."/>
            <person name="Mason T.M."/>
            <person name="Bowman C.L."/>
            <person name="Barnstead M.E."/>
            <person name="Feldblyum T.V."/>
            <person name="Buell C.R."/>
            <person name="Ketchum K.A."/>
            <person name="Lee J.J."/>
            <person name="Ronning C.M."/>
            <person name="Koo H.L."/>
            <person name="Moffat K.S."/>
            <person name="Cronin L.A."/>
            <person name="Shen M."/>
            <person name="Pai G."/>
            <person name="Van Aken S."/>
            <person name="Umayam L."/>
            <person name="Tallon L.J."/>
            <person name="Gill J.E."/>
            <person name="Adams M.D."/>
            <person name="Carrera A.J."/>
            <person name="Creasy T.H."/>
            <person name="Goodman H.M."/>
            <person name="Somerville C.R."/>
            <person name="Copenhaver G.P."/>
            <person name="Preuss D."/>
            <person name="Nierman W.C."/>
            <person name="White O."/>
            <person name="Eisen J.A."/>
            <person name="Salzberg S.L."/>
            <person name="Fraser C.M."/>
            <person name="Venter J.C."/>
        </authorList>
    </citation>
    <scope>NUCLEOTIDE SEQUENCE [LARGE SCALE GENOMIC DNA] (ISOFORM 2)</scope>
    <source>
        <strain>cv. Columbia</strain>
    </source>
</reference>
<reference key="2">
    <citation type="journal article" date="2017" name="Plant J.">
        <title>Araport11: a complete reannotation of the Arabidopsis thaliana reference genome.</title>
        <authorList>
            <person name="Cheng C.Y."/>
            <person name="Krishnakumar V."/>
            <person name="Chan A.P."/>
            <person name="Thibaud-Nissen F."/>
            <person name="Schobel S."/>
            <person name="Town C.D."/>
        </authorList>
    </citation>
    <scope>GENOME REANNOTATION</scope>
    <source>
        <strain>cv. Columbia</strain>
    </source>
</reference>
<reference key="3">
    <citation type="journal article" date="2006" name="Plant Biotechnol. J.">
        <title>Simultaneous high-throughput recombinational cloning of open reading frames in closed and open configurations.</title>
        <authorList>
            <person name="Underwood B.A."/>
            <person name="Vanderhaeghen R."/>
            <person name="Whitford R."/>
            <person name="Town C.D."/>
            <person name="Hilson P."/>
        </authorList>
    </citation>
    <scope>NUCLEOTIDE SEQUENCE [LARGE SCALE MRNA] (ISOFORM 1)</scope>
    <source>
        <strain>cv. Columbia</strain>
    </source>
</reference>
<reference key="4">
    <citation type="journal article" date="2003" name="Plant Physiol.">
        <title>Identification, expression, and import of components 17 and 23 of the inner mitochondrial membrane translocase from Arabidopsis.</title>
        <authorList>
            <person name="Murcha M.W."/>
            <person name="Lister R."/>
            <person name="Ho A.Y."/>
            <person name="Whelan J."/>
        </authorList>
    </citation>
    <scope>IDENTIFICATION</scope>
</reference>
<reference key="5">
    <citation type="journal article" date="2004" name="Plant Physiol.">
        <title>A transcriptomic and proteomic characterization of the Arabidopsis mitochondrial protein import apparatus and its response to mitochondrial dysfunction.</title>
        <authorList>
            <person name="Lister R."/>
            <person name="Chew O."/>
            <person name="Lee M.N."/>
            <person name="Heazlewood J.L."/>
            <person name="Clifton R."/>
            <person name="Parker K.L."/>
            <person name="Millar A.H."/>
            <person name="Whelan J."/>
        </authorList>
    </citation>
    <scope>TISSUE SPECIFICITY</scope>
</reference>
<name>TI441_ARATH</name>
<proteinExistence type="evidence at transcript level"/>